<proteinExistence type="inferred from homology"/>
<reference key="1">
    <citation type="journal article" date="2009" name="PLoS Pathog.">
        <title>Molecular evolutionary consequences of niche restriction in Francisella tularensis, a facultative intracellular pathogen.</title>
        <authorList>
            <person name="Larsson P."/>
            <person name="Elfsmark D."/>
            <person name="Svensson K."/>
            <person name="Wikstroem P."/>
            <person name="Forsman M."/>
            <person name="Brettin T."/>
            <person name="Keim P."/>
            <person name="Johansson A."/>
        </authorList>
    </citation>
    <scope>NUCLEOTIDE SEQUENCE [LARGE SCALE GENOMIC DNA]</scope>
    <source>
        <strain>FSC147</strain>
    </source>
</reference>
<comment type="function">
    <text evidence="1">Prevents the cell division inhibition by proteins MinC and MinD at internal division sites while permitting inhibition at polar sites. This ensures cell division at the proper site by restricting the formation of a division septum at the midpoint of the long axis of the cell.</text>
</comment>
<comment type="similarity">
    <text evidence="1">Belongs to the MinE family.</text>
</comment>
<accession>B2SFL7</accession>
<name>MINE_FRATM</name>
<evidence type="ECO:0000255" key="1">
    <source>
        <dbReference type="HAMAP-Rule" id="MF_00262"/>
    </source>
</evidence>
<protein>
    <recommendedName>
        <fullName evidence="1">Cell division topological specificity factor</fullName>
    </recommendedName>
</protein>
<gene>
    <name evidence="1" type="primary">minE</name>
    <name type="ordered locus">FTM_0309</name>
</gene>
<keyword id="KW-0131">Cell cycle</keyword>
<keyword id="KW-0132">Cell division</keyword>
<sequence length="90" mass="10184">MLAKLFGLSKKQQSASVAKERLQIIVAHQRSELHPRSSKISSHLLAELKDEIIEVVKKYVALSEENIRDIDLKVEDSSKNSTIEVNIPFN</sequence>
<feature type="chain" id="PRO_1000114222" description="Cell division topological specificity factor">
    <location>
        <begin position="1"/>
        <end position="90"/>
    </location>
</feature>
<organism>
    <name type="scientific">Francisella tularensis subsp. mediasiatica (strain FSC147)</name>
    <dbReference type="NCBI Taxonomy" id="441952"/>
    <lineage>
        <taxon>Bacteria</taxon>
        <taxon>Pseudomonadati</taxon>
        <taxon>Pseudomonadota</taxon>
        <taxon>Gammaproteobacteria</taxon>
        <taxon>Thiotrichales</taxon>
        <taxon>Francisellaceae</taxon>
        <taxon>Francisella</taxon>
    </lineage>
</organism>
<dbReference type="EMBL" id="CP000915">
    <property type="protein sequence ID" value="ACD30366.1"/>
    <property type="molecule type" value="Genomic_DNA"/>
</dbReference>
<dbReference type="KEGG" id="ftm:FTM_0309"/>
<dbReference type="HOGENOM" id="CLU_137929_2_2_6"/>
<dbReference type="GO" id="GO:0051301">
    <property type="term" value="P:cell division"/>
    <property type="evidence" value="ECO:0007669"/>
    <property type="project" value="UniProtKB-KW"/>
</dbReference>
<dbReference type="GO" id="GO:0032955">
    <property type="term" value="P:regulation of division septum assembly"/>
    <property type="evidence" value="ECO:0007669"/>
    <property type="project" value="InterPro"/>
</dbReference>
<dbReference type="Gene3D" id="3.30.1070.10">
    <property type="entry name" value="Cell division topological specificity factor MinE"/>
    <property type="match status" value="1"/>
</dbReference>
<dbReference type="HAMAP" id="MF_00262">
    <property type="entry name" value="MinE"/>
    <property type="match status" value="1"/>
</dbReference>
<dbReference type="InterPro" id="IPR005527">
    <property type="entry name" value="MinE"/>
</dbReference>
<dbReference type="InterPro" id="IPR036707">
    <property type="entry name" value="MinE_sf"/>
</dbReference>
<dbReference type="NCBIfam" id="TIGR01215">
    <property type="entry name" value="minE"/>
    <property type="match status" value="1"/>
</dbReference>
<dbReference type="NCBIfam" id="NF001422">
    <property type="entry name" value="PRK00296.1"/>
    <property type="match status" value="1"/>
</dbReference>
<dbReference type="Pfam" id="PF03776">
    <property type="entry name" value="MinE"/>
    <property type="match status" value="1"/>
</dbReference>
<dbReference type="SUPFAM" id="SSF55229">
    <property type="entry name" value="Cell division protein MinE topological specificity domain"/>
    <property type="match status" value="1"/>
</dbReference>